<protein>
    <recommendedName>
        <fullName>Succinate dehydrogenase iron-sulfur subunit</fullName>
        <ecNumber>1.3.5.1</ecNumber>
    </recommendedName>
</protein>
<keyword id="KW-0001">2Fe-2S</keyword>
<keyword id="KW-0003">3Fe-4S</keyword>
<keyword id="KW-0004">4Fe-4S</keyword>
<keyword id="KW-0249">Electron transport</keyword>
<keyword id="KW-0408">Iron</keyword>
<keyword id="KW-0411">Iron-sulfur</keyword>
<keyword id="KW-0479">Metal-binding</keyword>
<keyword id="KW-0560">Oxidoreductase</keyword>
<keyword id="KW-0813">Transport</keyword>
<keyword id="KW-0816">Tricarboxylic acid cycle</keyword>
<evidence type="ECO:0000250" key="1"/>
<evidence type="ECO:0000255" key="2">
    <source>
        <dbReference type="PROSITE-ProRule" id="PRU00465"/>
    </source>
</evidence>
<evidence type="ECO:0000255" key="3">
    <source>
        <dbReference type="PROSITE-ProRule" id="PRU00711"/>
    </source>
</evidence>
<evidence type="ECO:0000256" key="4">
    <source>
        <dbReference type="SAM" id="MobiDB-lite"/>
    </source>
</evidence>
<evidence type="ECO:0000305" key="5"/>
<gene>
    <name type="primary">sdhB</name>
    <name type="ordered locus">RF_0136</name>
</gene>
<comment type="catalytic activity">
    <reaction>
        <text>a quinone + succinate = fumarate + a quinol</text>
        <dbReference type="Rhea" id="RHEA:40523"/>
        <dbReference type="ChEBI" id="CHEBI:24646"/>
        <dbReference type="ChEBI" id="CHEBI:29806"/>
        <dbReference type="ChEBI" id="CHEBI:30031"/>
        <dbReference type="ChEBI" id="CHEBI:132124"/>
        <dbReference type="EC" id="1.3.5.1"/>
    </reaction>
</comment>
<comment type="cofactor">
    <cofactor>
        <name>[2Fe-2S] cluster</name>
        <dbReference type="ChEBI" id="CHEBI:190135"/>
    </cofactor>
    <text>Binds 1 [2Fe-2S] cluster.</text>
</comment>
<comment type="cofactor">
    <cofactor>
        <name>[3Fe-4S] cluster</name>
        <dbReference type="ChEBI" id="CHEBI:21137"/>
    </cofactor>
    <text>Binds 1 [3Fe-4S] cluster.</text>
</comment>
<comment type="cofactor">
    <cofactor>
        <name>[4Fe-4S] cluster</name>
        <dbReference type="ChEBI" id="CHEBI:49883"/>
    </cofactor>
    <text>Binds 1 [4Fe-4S] cluster.</text>
</comment>
<comment type="pathway">
    <text>Carbohydrate metabolism; tricarboxylic acid cycle; fumarate from succinate (bacterial route): step 1/1.</text>
</comment>
<comment type="subunit">
    <text>Part of an enzyme complex containing four subunits: a flavoprotein, an iron-sulfur, cytochrome b-556, and a hydrophobic anchor protein.</text>
</comment>
<comment type="similarity">
    <text evidence="5">Belongs to the succinate dehydrogenase/fumarate reductase iron-sulfur protein family.</text>
</comment>
<reference key="1">
    <citation type="journal article" date="2005" name="PLoS Biol.">
        <title>The genome sequence of Rickettsia felis identifies the first putative conjugative plasmid in an obligate intracellular parasite.</title>
        <authorList>
            <person name="Ogata H."/>
            <person name="Renesto P."/>
            <person name="Audic S."/>
            <person name="Robert C."/>
            <person name="Blanc G."/>
            <person name="Fournier P.-E."/>
            <person name="Parinello H."/>
            <person name="Claverie J.-M."/>
            <person name="Raoult D."/>
        </authorList>
    </citation>
    <scope>NUCLEOTIDE SEQUENCE [LARGE SCALE GENOMIC DNA]</scope>
    <source>
        <strain>ATCC VR-1525 / URRWXCal2</strain>
    </source>
</reference>
<dbReference type="EC" id="1.3.5.1"/>
<dbReference type="EMBL" id="CP000053">
    <property type="protein sequence ID" value="AAY60987.1"/>
    <property type="molecule type" value="Genomic_DNA"/>
</dbReference>
<dbReference type="SMR" id="Q4UN71"/>
<dbReference type="STRING" id="315456.RF_0136"/>
<dbReference type="KEGG" id="rfe:RF_0136"/>
<dbReference type="eggNOG" id="COG0479">
    <property type="taxonomic scope" value="Bacteria"/>
</dbReference>
<dbReference type="HOGENOM" id="CLU_044838_0_2_5"/>
<dbReference type="OrthoDB" id="9804391at2"/>
<dbReference type="UniPathway" id="UPA00223">
    <property type="reaction ID" value="UER01005"/>
</dbReference>
<dbReference type="Proteomes" id="UP000008548">
    <property type="component" value="Chromosome"/>
</dbReference>
<dbReference type="GO" id="GO:0051537">
    <property type="term" value="F:2 iron, 2 sulfur cluster binding"/>
    <property type="evidence" value="ECO:0007669"/>
    <property type="project" value="UniProtKB-KW"/>
</dbReference>
<dbReference type="GO" id="GO:0051538">
    <property type="term" value="F:3 iron, 4 sulfur cluster binding"/>
    <property type="evidence" value="ECO:0007669"/>
    <property type="project" value="UniProtKB-KW"/>
</dbReference>
<dbReference type="GO" id="GO:0051539">
    <property type="term" value="F:4 iron, 4 sulfur cluster binding"/>
    <property type="evidence" value="ECO:0007669"/>
    <property type="project" value="UniProtKB-KW"/>
</dbReference>
<dbReference type="GO" id="GO:0009055">
    <property type="term" value="F:electron transfer activity"/>
    <property type="evidence" value="ECO:0007669"/>
    <property type="project" value="InterPro"/>
</dbReference>
<dbReference type="GO" id="GO:0046872">
    <property type="term" value="F:metal ion binding"/>
    <property type="evidence" value="ECO:0007669"/>
    <property type="project" value="UniProtKB-KW"/>
</dbReference>
<dbReference type="GO" id="GO:0008177">
    <property type="term" value="F:succinate dehydrogenase (quinone) activity"/>
    <property type="evidence" value="ECO:0007669"/>
    <property type="project" value="UniProtKB-EC"/>
</dbReference>
<dbReference type="GO" id="GO:0022904">
    <property type="term" value="P:respiratory electron transport chain"/>
    <property type="evidence" value="ECO:0007669"/>
    <property type="project" value="TreeGrafter"/>
</dbReference>
<dbReference type="GO" id="GO:0006099">
    <property type="term" value="P:tricarboxylic acid cycle"/>
    <property type="evidence" value="ECO:0007669"/>
    <property type="project" value="UniProtKB-UniPathway"/>
</dbReference>
<dbReference type="FunFam" id="3.10.20.30:FF:000007">
    <property type="entry name" value="Succinate dehydrogenase [ubiquinone] iron-sulfur subunit, mitochondrial"/>
    <property type="match status" value="1"/>
</dbReference>
<dbReference type="FunFam" id="1.10.1060.10:FF:000001">
    <property type="entry name" value="Succinate dehydrogenase iron-sulfur subunit SdhB"/>
    <property type="match status" value="1"/>
</dbReference>
<dbReference type="Gene3D" id="3.10.20.30">
    <property type="match status" value="1"/>
</dbReference>
<dbReference type="Gene3D" id="1.10.1060.10">
    <property type="entry name" value="Alpha-helical ferredoxin"/>
    <property type="match status" value="1"/>
</dbReference>
<dbReference type="InterPro" id="IPR036010">
    <property type="entry name" value="2Fe-2S_ferredoxin-like_sf"/>
</dbReference>
<dbReference type="InterPro" id="IPR001041">
    <property type="entry name" value="2Fe-2S_ferredoxin-type"/>
</dbReference>
<dbReference type="InterPro" id="IPR006058">
    <property type="entry name" value="2Fe2S_fd_BS"/>
</dbReference>
<dbReference type="InterPro" id="IPR017896">
    <property type="entry name" value="4Fe4S_Fe-S-bd"/>
</dbReference>
<dbReference type="InterPro" id="IPR017900">
    <property type="entry name" value="4Fe4S_Fe_S_CS"/>
</dbReference>
<dbReference type="InterPro" id="IPR012675">
    <property type="entry name" value="Beta-grasp_dom_sf"/>
</dbReference>
<dbReference type="InterPro" id="IPR009051">
    <property type="entry name" value="Helical_ferredxn"/>
</dbReference>
<dbReference type="InterPro" id="IPR050573">
    <property type="entry name" value="SDH/FRD_Iron-Sulfur"/>
</dbReference>
<dbReference type="InterPro" id="IPR004489">
    <property type="entry name" value="Succ_DH/fum_Rdtase_Fe-S"/>
</dbReference>
<dbReference type="InterPro" id="IPR025192">
    <property type="entry name" value="Succ_DH/fum_Rdtase_N"/>
</dbReference>
<dbReference type="NCBIfam" id="TIGR00384">
    <property type="entry name" value="dhsB"/>
    <property type="match status" value="1"/>
</dbReference>
<dbReference type="NCBIfam" id="NF004616">
    <property type="entry name" value="PRK05950.1"/>
    <property type="match status" value="1"/>
</dbReference>
<dbReference type="PANTHER" id="PTHR11921:SF29">
    <property type="entry name" value="SUCCINATE DEHYDROGENASE [UBIQUINONE] IRON-SULFUR SUBUNIT, MITOCHONDRIAL"/>
    <property type="match status" value="1"/>
</dbReference>
<dbReference type="PANTHER" id="PTHR11921">
    <property type="entry name" value="SUCCINATE DEHYDROGENASE IRON-SULFUR PROTEIN"/>
    <property type="match status" value="1"/>
</dbReference>
<dbReference type="Pfam" id="PF13085">
    <property type="entry name" value="Fer2_3"/>
    <property type="match status" value="1"/>
</dbReference>
<dbReference type="Pfam" id="PF13534">
    <property type="entry name" value="Fer4_17"/>
    <property type="match status" value="1"/>
</dbReference>
<dbReference type="SUPFAM" id="SSF54292">
    <property type="entry name" value="2Fe-2S ferredoxin-like"/>
    <property type="match status" value="1"/>
</dbReference>
<dbReference type="SUPFAM" id="SSF46548">
    <property type="entry name" value="alpha-helical ferredoxin"/>
    <property type="match status" value="1"/>
</dbReference>
<dbReference type="PROSITE" id="PS00197">
    <property type="entry name" value="2FE2S_FER_1"/>
    <property type="match status" value="1"/>
</dbReference>
<dbReference type="PROSITE" id="PS51085">
    <property type="entry name" value="2FE2S_FER_2"/>
    <property type="match status" value="1"/>
</dbReference>
<dbReference type="PROSITE" id="PS00198">
    <property type="entry name" value="4FE4S_FER_1"/>
    <property type="match status" value="1"/>
</dbReference>
<dbReference type="PROSITE" id="PS51379">
    <property type="entry name" value="4FE4S_FER_2"/>
    <property type="match status" value="1"/>
</dbReference>
<feature type="chain" id="PRO_0000280983" description="Succinate dehydrogenase iron-sulfur subunit">
    <location>
        <begin position="1"/>
        <end position="261"/>
    </location>
</feature>
<feature type="domain" description="2Fe-2S ferredoxin-type" evidence="2">
    <location>
        <begin position="28"/>
        <end position="119"/>
    </location>
</feature>
<feature type="domain" description="4Fe-4S ferredoxin-type" evidence="3">
    <location>
        <begin position="161"/>
        <end position="191"/>
    </location>
</feature>
<feature type="region of interest" description="Disordered" evidence="4">
    <location>
        <begin position="1"/>
        <end position="23"/>
    </location>
</feature>
<feature type="binding site" evidence="1">
    <location>
        <position position="80"/>
    </location>
    <ligand>
        <name>[2Fe-2S] cluster</name>
        <dbReference type="ChEBI" id="CHEBI:190135"/>
    </ligand>
</feature>
<feature type="binding site" evidence="1">
    <location>
        <position position="85"/>
    </location>
    <ligand>
        <name>[2Fe-2S] cluster</name>
        <dbReference type="ChEBI" id="CHEBI:190135"/>
    </ligand>
</feature>
<feature type="binding site" evidence="1">
    <location>
        <position position="100"/>
    </location>
    <ligand>
        <name>[2Fe-2S] cluster</name>
        <dbReference type="ChEBI" id="CHEBI:190135"/>
    </ligand>
</feature>
<feature type="binding site" evidence="1">
    <location>
        <position position="171"/>
    </location>
    <ligand>
        <name>[4Fe-4S] cluster</name>
        <dbReference type="ChEBI" id="CHEBI:49883"/>
    </ligand>
</feature>
<feature type="binding site" evidence="1">
    <location>
        <position position="174"/>
    </location>
    <ligand>
        <name>[4Fe-4S] cluster</name>
        <dbReference type="ChEBI" id="CHEBI:49883"/>
    </ligand>
</feature>
<feature type="binding site" evidence="1">
    <location>
        <position position="177"/>
    </location>
    <ligand>
        <name>[4Fe-4S] cluster</name>
        <dbReference type="ChEBI" id="CHEBI:49883"/>
    </ligand>
</feature>
<feature type="binding site" evidence="1">
    <location>
        <position position="181"/>
    </location>
    <ligand>
        <name>[3Fe-4S] cluster</name>
        <dbReference type="ChEBI" id="CHEBI:21137"/>
    </ligand>
</feature>
<feature type="binding site" evidence="1">
    <location>
        <position position="186"/>
    </location>
    <ligand>
        <name>a ubiquinone</name>
        <dbReference type="ChEBI" id="CHEBI:16389"/>
        <note>ligand shared with SdhD subunit</note>
    </ligand>
</feature>
<feature type="binding site" evidence="1">
    <location>
        <position position="228"/>
    </location>
    <ligand>
        <name>[3Fe-4S] cluster</name>
        <dbReference type="ChEBI" id="CHEBI:21137"/>
    </ligand>
</feature>
<feature type="binding site" evidence="1">
    <location>
        <position position="234"/>
    </location>
    <ligand>
        <name>[3Fe-4S] cluster</name>
        <dbReference type="ChEBI" id="CHEBI:21137"/>
    </ligand>
</feature>
<feature type="binding site" evidence="1">
    <location>
        <position position="238"/>
    </location>
    <ligand>
        <name>[4Fe-4S] cluster</name>
        <dbReference type="ChEBI" id="CHEBI:49883"/>
    </ligand>
</feature>
<sequence length="261" mass="29613">MAELRLPPNSVVKKGKEHKEQEEMLKPRKVKIYRYDPDLDENPTIDSFEIDLSKTGPMVLDALIKIKNEIDSTLTFRRSCREGICGSCSMNIDGTNTLACIKPIEEISGDIKIYPLPHMKVVKDLVPDMSHFYAQYESIEPWLKTDSPTPSNSERLQSIKGREKLDGLYECILCACCSTSCPSYWWNGDKYLGPAILLQAYRWIADSRDDHTGERLEDLEDPSKLYRCHTIMNCTKTCPKGLNPAKAIGKIKSLIAERHGV</sequence>
<name>SDHB_RICFE</name>
<organism>
    <name type="scientific">Rickettsia felis (strain ATCC VR-1525 / URRWXCal2)</name>
    <name type="common">Rickettsia azadi</name>
    <dbReference type="NCBI Taxonomy" id="315456"/>
    <lineage>
        <taxon>Bacteria</taxon>
        <taxon>Pseudomonadati</taxon>
        <taxon>Pseudomonadota</taxon>
        <taxon>Alphaproteobacteria</taxon>
        <taxon>Rickettsiales</taxon>
        <taxon>Rickettsiaceae</taxon>
        <taxon>Rickettsieae</taxon>
        <taxon>Rickettsia</taxon>
        <taxon>spotted fever group</taxon>
    </lineage>
</organism>
<proteinExistence type="inferred from homology"/>
<accession>Q4UN71</accession>